<name>FZR1_ARATH</name>
<sequence>MEEDESTTPKKKSDSQLNLPPSMNRPTVSLESRINRLIDSNHYHSPSKPIYSDRFIPSRSGSNFALFDLASSSPNKKDGKEDGAGSYASLLKTALFGPVTPEKSDVVNGFSPSGNIFRFKTETQRSLNLYPPFDSDVVSGVSPSPVKSPRKILRSPYKVLDAPALQDDFYLNLVDWSAQNVLAVGLGNCVYLWNACSSKVTKLCDLGVDETVCSVGWALRGTHLAIGTSSGTVQIWDVLRCKNIRTMEGHRLRVGALAWSSSVLSSGSRDKSILQRDIRTQEDHVSKLKGHKSEICGLKWSSDNRELASGGNDNKLFVWNQHSTQPVLRFCEHAAAVKAIAWSPHHFGLLASGGGTADRCIRFWNTTTNTHLNCVDTNSQVCNLVWSKNVNELVSTHGYSQNQIIVWKYPTMSKLATLTGHSYRVLYLAVSPDGQTIVTGAGDETLRFWNVFPSPKSQSRESEIGALSFGRTTIR</sequence>
<dbReference type="EMBL" id="AL078606">
    <property type="protein sequence ID" value="CAB44330.1"/>
    <property type="status" value="ALT_SEQ"/>
    <property type="molecule type" value="Genomic_DNA"/>
</dbReference>
<dbReference type="EMBL" id="AL161533">
    <property type="protein sequence ID" value="CAB78235.1"/>
    <property type="status" value="ALT_SEQ"/>
    <property type="molecule type" value="Genomic_DNA"/>
</dbReference>
<dbReference type="EMBL" id="CP002687">
    <property type="protein sequence ID" value="AEE83070.1"/>
    <property type="molecule type" value="Genomic_DNA"/>
</dbReference>
<dbReference type="EMBL" id="AY063875">
    <property type="protein sequence ID" value="AAL36231.1"/>
    <property type="molecule type" value="mRNA"/>
</dbReference>
<dbReference type="EMBL" id="AY091235">
    <property type="protein sequence ID" value="AAM14174.1"/>
    <property type="molecule type" value="mRNA"/>
</dbReference>
<dbReference type="PIR" id="T09351">
    <property type="entry name" value="T09351"/>
</dbReference>
<dbReference type="RefSeq" id="NP_192929.2">
    <property type="nucleotide sequence ID" value="NM_117262.3"/>
</dbReference>
<dbReference type="SMR" id="Q8VZS9"/>
<dbReference type="BioGRID" id="12097">
    <property type="interactions" value="29"/>
</dbReference>
<dbReference type="FunCoup" id="Q8VZS9">
    <property type="interactions" value="3558"/>
</dbReference>
<dbReference type="IntAct" id="Q8VZS9">
    <property type="interactions" value="22"/>
</dbReference>
<dbReference type="STRING" id="3702.Q8VZS9"/>
<dbReference type="iPTMnet" id="Q8VZS9"/>
<dbReference type="PaxDb" id="3702-AT4G11920.1"/>
<dbReference type="ProteomicsDB" id="247382"/>
<dbReference type="EnsemblPlants" id="AT4G11920.1">
    <property type="protein sequence ID" value="AT4G11920.1"/>
    <property type="gene ID" value="AT4G11920"/>
</dbReference>
<dbReference type="GeneID" id="826799"/>
<dbReference type="Gramene" id="AT4G11920.1">
    <property type="protein sequence ID" value="AT4G11920.1"/>
    <property type="gene ID" value="AT4G11920"/>
</dbReference>
<dbReference type="KEGG" id="ath:AT4G11920"/>
<dbReference type="Araport" id="AT4G11920"/>
<dbReference type="TAIR" id="AT4G11920">
    <property type="gene designation" value="CCS52A2"/>
</dbReference>
<dbReference type="eggNOG" id="KOG0305">
    <property type="taxonomic scope" value="Eukaryota"/>
</dbReference>
<dbReference type="HOGENOM" id="CLU_014831_4_1_1"/>
<dbReference type="InParanoid" id="Q8VZS9"/>
<dbReference type="OMA" id="SGTVQIW"/>
<dbReference type="PhylomeDB" id="Q8VZS9"/>
<dbReference type="UniPathway" id="UPA00143"/>
<dbReference type="PRO" id="PR:Q8VZS9"/>
<dbReference type="Proteomes" id="UP000006548">
    <property type="component" value="Chromosome 4"/>
</dbReference>
<dbReference type="ExpressionAtlas" id="Q8VZS9">
    <property type="expression patterns" value="baseline and differential"/>
</dbReference>
<dbReference type="GO" id="GO:0005737">
    <property type="term" value="C:cytoplasm"/>
    <property type="evidence" value="ECO:0000314"/>
    <property type="project" value="TAIR"/>
</dbReference>
<dbReference type="GO" id="GO:0005634">
    <property type="term" value="C:nucleus"/>
    <property type="evidence" value="ECO:0000314"/>
    <property type="project" value="TAIR"/>
</dbReference>
<dbReference type="GO" id="GO:0010997">
    <property type="term" value="F:anaphase-promoting complex binding"/>
    <property type="evidence" value="ECO:0007669"/>
    <property type="project" value="InterPro"/>
</dbReference>
<dbReference type="GO" id="GO:0097027">
    <property type="term" value="F:ubiquitin-protein transferase activator activity"/>
    <property type="evidence" value="ECO:0007669"/>
    <property type="project" value="InterPro"/>
</dbReference>
<dbReference type="GO" id="GO:0051301">
    <property type="term" value="P:cell division"/>
    <property type="evidence" value="ECO:0007669"/>
    <property type="project" value="UniProtKB-KW"/>
</dbReference>
<dbReference type="GO" id="GO:0010492">
    <property type="term" value="P:maintenance of shoot apical meristem identity"/>
    <property type="evidence" value="ECO:0000315"/>
    <property type="project" value="TAIR"/>
</dbReference>
<dbReference type="GO" id="GO:0032877">
    <property type="term" value="P:positive regulation of DNA endoreduplication"/>
    <property type="evidence" value="ECO:0000315"/>
    <property type="project" value="TAIR"/>
</dbReference>
<dbReference type="GO" id="GO:0016567">
    <property type="term" value="P:protein ubiquitination"/>
    <property type="evidence" value="ECO:0007669"/>
    <property type="project" value="UniProtKB-UniPathway"/>
</dbReference>
<dbReference type="GO" id="GO:0008361">
    <property type="term" value="P:regulation of cell size"/>
    <property type="evidence" value="ECO:0000315"/>
    <property type="project" value="TAIR"/>
</dbReference>
<dbReference type="FunFam" id="2.130.10.10:FF:000025">
    <property type="entry name" value="FIZZY-related 2 isoform 1"/>
    <property type="match status" value="1"/>
</dbReference>
<dbReference type="Gene3D" id="2.130.10.10">
    <property type="entry name" value="YVTN repeat-like/Quinoprotein amine dehydrogenase"/>
    <property type="match status" value="1"/>
</dbReference>
<dbReference type="InterPro" id="IPR033010">
    <property type="entry name" value="Cdc20/Fizzy"/>
</dbReference>
<dbReference type="InterPro" id="IPR015943">
    <property type="entry name" value="WD40/YVTN_repeat-like_dom_sf"/>
</dbReference>
<dbReference type="InterPro" id="IPR056150">
    <property type="entry name" value="WD40_CDC20-Fz"/>
</dbReference>
<dbReference type="InterPro" id="IPR019775">
    <property type="entry name" value="WD40_repeat_CS"/>
</dbReference>
<dbReference type="InterPro" id="IPR036322">
    <property type="entry name" value="WD40_repeat_dom_sf"/>
</dbReference>
<dbReference type="InterPro" id="IPR001680">
    <property type="entry name" value="WD40_rpt"/>
</dbReference>
<dbReference type="PANTHER" id="PTHR19918">
    <property type="entry name" value="CELL DIVISION CYCLE 20 CDC20 FIZZY -RELATED"/>
    <property type="match status" value="1"/>
</dbReference>
<dbReference type="PANTHER" id="PTHR19918:SF1">
    <property type="entry name" value="FIZZY-RELATED PROTEIN HOMOLOG"/>
    <property type="match status" value="1"/>
</dbReference>
<dbReference type="Pfam" id="PF24807">
    <property type="entry name" value="WD40_CDC20-Fz"/>
    <property type="match status" value="1"/>
</dbReference>
<dbReference type="SMART" id="SM00320">
    <property type="entry name" value="WD40"/>
    <property type="match status" value="5"/>
</dbReference>
<dbReference type="SUPFAM" id="SSF50978">
    <property type="entry name" value="WD40 repeat-like"/>
    <property type="match status" value="1"/>
</dbReference>
<dbReference type="PROSITE" id="PS00678">
    <property type="entry name" value="WD_REPEATS_1"/>
    <property type="match status" value="2"/>
</dbReference>
<dbReference type="PROSITE" id="PS50082">
    <property type="entry name" value="WD_REPEATS_2"/>
    <property type="match status" value="2"/>
</dbReference>
<dbReference type="PROSITE" id="PS50294">
    <property type="entry name" value="WD_REPEATS_REGION"/>
    <property type="match status" value="1"/>
</dbReference>
<keyword id="KW-0131">Cell cycle</keyword>
<keyword id="KW-0132">Cell division</keyword>
<keyword id="KW-0498">Mitosis</keyword>
<keyword id="KW-0539">Nucleus</keyword>
<keyword id="KW-1185">Reference proteome</keyword>
<keyword id="KW-0677">Repeat</keyword>
<keyword id="KW-0833">Ubl conjugation pathway</keyword>
<keyword id="KW-0853">WD repeat</keyword>
<protein>
    <recommendedName>
        <fullName>Protein FIZZY-RELATED 1</fullName>
    </recommendedName>
    <alternativeName>
        <fullName>Cell cycle switch protein CCS52A2</fullName>
    </alternativeName>
</protein>
<gene>
    <name type="primary">FZR1</name>
    <name type="synonym">CCS52A2</name>
    <name type="synonym">CDH1-1</name>
    <name type="ordered locus">At4g11920</name>
    <name type="ORF">T26M18.130</name>
</gene>
<comment type="function">
    <text evidence="2 3">Activator protein that regulates the ubiquitin ligase activity and substrate specificity of the anaphase promoting complex/cyclosome (APC/C). Required for meristem organization and maintenance of quiescent center identity and stem cells.</text>
</comment>
<comment type="pathway">
    <text>Protein modification; protein ubiquitination.</text>
</comment>
<comment type="subunit">
    <text evidence="2 4 5">Associates with the APC/C complex. Interacts with CDC20-1, CDC20-2, CYCA1-1, CYCA1-2, CYCA3-4, CYCB1-1 and CYCB1-2. Binds to GIG1.</text>
</comment>
<comment type="interaction">
    <interactant intactId="EBI-1749329">
        <id>Q8VZS9</id>
    </interactant>
    <interactant intactId="EBI-1668733">
        <id>Q8LGU6</id>
        <label>CDC27B</label>
    </interactant>
    <organismsDiffer>false</organismsDiffer>
    <experiments>2</experiments>
</comment>
<comment type="subcellular location">
    <subcellularLocation>
        <location evidence="3">Nucleus</location>
    </subcellularLocation>
</comment>
<comment type="tissue specificity">
    <text evidence="3">Expressed in the root tip, predominantly in the root cap, quiescent center cells, surrounding stem cells and columella.</text>
</comment>
<comment type="developmental stage">
    <text evidence="2">Expressed from late M until late S-early G2 phases.</text>
</comment>
<comment type="disruption phenotype">
    <text evidence="3">Stunted plants. Impaired root growth and smaller root meristem.</text>
</comment>
<comment type="miscellaneous">
    <text>FZR2 controls the induction of early rounds of endoreduplication while the remaining rounds may be mediated by FZR1 and FZR3.</text>
</comment>
<comment type="miscellaneous">
    <text evidence="7">FZR1 and FZR2 are functional homologs, and their functional divergence in root development arises from the different expression patterns.</text>
</comment>
<comment type="similarity">
    <text evidence="6">Belongs to the WD repeat CDC20/Fizzy family.</text>
</comment>
<comment type="sequence caution" evidence="6">
    <conflict type="erroneous gene model prediction">
        <sequence resource="EMBL-CDS" id="CAB44330"/>
    </conflict>
</comment>
<comment type="sequence caution" evidence="6">
    <conflict type="erroneous gene model prediction">
        <sequence resource="EMBL-CDS" id="CAB78235"/>
    </conflict>
</comment>
<comment type="online information" name="Arabidopsis APC/C subunits">
    <link uri="http://personal.rhul.ac.uk/ujba/110/apc/APC.htm"/>
</comment>
<proteinExistence type="evidence at protein level"/>
<reference key="1">
    <citation type="journal article" date="1999" name="Nature">
        <title>Sequence and analysis of chromosome 4 of the plant Arabidopsis thaliana.</title>
        <authorList>
            <person name="Mayer K.F.X."/>
            <person name="Schueller C."/>
            <person name="Wambutt R."/>
            <person name="Murphy G."/>
            <person name="Volckaert G."/>
            <person name="Pohl T."/>
            <person name="Duesterhoeft A."/>
            <person name="Stiekema W."/>
            <person name="Entian K.-D."/>
            <person name="Terryn N."/>
            <person name="Harris B."/>
            <person name="Ansorge W."/>
            <person name="Brandt P."/>
            <person name="Grivell L.A."/>
            <person name="Rieger M."/>
            <person name="Weichselgartner M."/>
            <person name="de Simone V."/>
            <person name="Obermaier B."/>
            <person name="Mache R."/>
            <person name="Mueller M."/>
            <person name="Kreis M."/>
            <person name="Delseny M."/>
            <person name="Puigdomenech P."/>
            <person name="Watson M."/>
            <person name="Schmidtheini T."/>
            <person name="Reichert B."/>
            <person name="Portetelle D."/>
            <person name="Perez-Alonso M."/>
            <person name="Boutry M."/>
            <person name="Bancroft I."/>
            <person name="Vos P."/>
            <person name="Hoheisel J."/>
            <person name="Zimmermann W."/>
            <person name="Wedler H."/>
            <person name="Ridley P."/>
            <person name="Langham S.-A."/>
            <person name="McCullagh B."/>
            <person name="Bilham L."/>
            <person name="Robben J."/>
            <person name="van der Schueren J."/>
            <person name="Grymonprez B."/>
            <person name="Chuang Y.-J."/>
            <person name="Vandenbussche F."/>
            <person name="Braeken M."/>
            <person name="Weltjens I."/>
            <person name="Voet M."/>
            <person name="Bastiaens I."/>
            <person name="Aert R."/>
            <person name="Defoor E."/>
            <person name="Weitzenegger T."/>
            <person name="Bothe G."/>
            <person name="Ramsperger U."/>
            <person name="Hilbert H."/>
            <person name="Braun M."/>
            <person name="Holzer E."/>
            <person name="Brandt A."/>
            <person name="Peters S."/>
            <person name="van Staveren M."/>
            <person name="Dirkse W."/>
            <person name="Mooijman P."/>
            <person name="Klein Lankhorst R."/>
            <person name="Rose M."/>
            <person name="Hauf J."/>
            <person name="Koetter P."/>
            <person name="Berneiser S."/>
            <person name="Hempel S."/>
            <person name="Feldpausch M."/>
            <person name="Lamberth S."/>
            <person name="Van den Daele H."/>
            <person name="De Keyser A."/>
            <person name="Buysshaert C."/>
            <person name="Gielen J."/>
            <person name="Villarroel R."/>
            <person name="De Clercq R."/>
            <person name="van Montagu M."/>
            <person name="Rogers J."/>
            <person name="Cronin A."/>
            <person name="Quail M.A."/>
            <person name="Bray-Allen S."/>
            <person name="Clark L."/>
            <person name="Doggett J."/>
            <person name="Hall S."/>
            <person name="Kay M."/>
            <person name="Lennard N."/>
            <person name="McLay K."/>
            <person name="Mayes R."/>
            <person name="Pettett A."/>
            <person name="Rajandream M.A."/>
            <person name="Lyne M."/>
            <person name="Benes V."/>
            <person name="Rechmann S."/>
            <person name="Borkova D."/>
            <person name="Bloecker H."/>
            <person name="Scharfe M."/>
            <person name="Grimm M."/>
            <person name="Loehnert T.-H."/>
            <person name="Dose S."/>
            <person name="de Haan M."/>
            <person name="Maarse A.C."/>
            <person name="Schaefer M."/>
            <person name="Mueller-Auer S."/>
            <person name="Gabel C."/>
            <person name="Fuchs M."/>
            <person name="Fartmann B."/>
            <person name="Granderath K."/>
            <person name="Dauner D."/>
            <person name="Herzl A."/>
            <person name="Neumann S."/>
            <person name="Argiriou A."/>
            <person name="Vitale D."/>
            <person name="Liguori R."/>
            <person name="Piravandi E."/>
            <person name="Massenet O."/>
            <person name="Quigley F."/>
            <person name="Clabauld G."/>
            <person name="Muendlein A."/>
            <person name="Felber R."/>
            <person name="Schnabl S."/>
            <person name="Hiller R."/>
            <person name="Schmidt W."/>
            <person name="Lecharny A."/>
            <person name="Aubourg S."/>
            <person name="Chefdor F."/>
            <person name="Cooke R."/>
            <person name="Berger C."/>
            <person name="Monfort A."/>
            <person name="Casacuberta E."/>
            <person name="Gibbons T."/>
            <person name="Weber N."/>
            <person name="Vandenbol M."/>
            <person name="Bargues M."/>
            <person name="Terol J."/>
            <person name="Torres A."/>
            <person name="Perez-Perez A."/>
            <person name="Purnelle B."/>
            <person name="Bent E."/>
            <person name="Johnson S."/>
            <person name="Tacon D."/>
            <person name="Jesse T."/>
            <person name="Heijnen L."/>
            <person name="Schwarz S."/>
            <person name="Scholler P."/>
            <person name="Heber S."/>
            <person name="Francs P."/>
            <person name="Bielke C."/>
            <person name="Frishman D."/>
            <person name="Haase D."/>
            <person name="Lemcke K."/>
            <person name="Mewes H.-W."/>
            <person name="Stocker S."/>
            <person name="Zaccaria P."/>
            <person name="Bevan M."/>
            <person name="Wilson R.K."/>
            <person name="de la Bastide M."/>
            <person name="Habermann K."/>
            <person name="Parnell L."/>
            <person name="Dedhia N."/>
            <person name="Gnoj L."/>
            <person name="Schutz K."/>
            <person name="Huang E."/>
            <person name="Spiegel L."/>
            <person name="Sekhon M."/>
            <person name="Murray J."/>
            <person name="Sheet P."/>
            <person name="Cordes M."/>
            <person name="Abu-Threideh J."/>
            <person name="Stoneking T."/>
            <person name="Kalicki J."/>
            <person name="Graves T."/>
            <person name="Harmon G."/>
            <person name="Edwards J."/>
            <person name="Latreille P."/>
            <person name="Courtney L."/>
            <person name="Cloud J."/>
            <person name="Abbott A."/>
            <person name="Scott K."/>
            <person name="Johnson D."/>
            <person name="Minx P."/>
            <person name="Bentley D."/>
            <person name="Fulton B."/>
            <person name="Miller N."/>
            <person name="Greco T."/>
            <person name="Kemp K."/>
            <person name="Kramer J."/>
            <person name="Fulton L."/>
            <person name="Mardis E."/>
            <person name="Dante M."/>
            <person name="Pepin K."/>
            <person name="Hillier L.W."/>
            <person name="Nelson J."/>
            <person name="Spieth J."/>
            <person name="Ryan E."/>
            <person name="Andrews S."/>
            <person name="Geisel C."/>
            <person name="Layman D."/>
            <person name="Du H."/>
            <person name="Ali J."/>
            <person name="Berghoff A."/>
            <person name="Jones K."/>
            <person name="Drone K."/>
            <person name="Cotton M."/>
            <person name="Joshu C."/>
            <person name="Antonoiu B."/>
            <person name="Zidanic M."/>
            <person name="Strong C."/>
            <person name="Sun H."/>
            <person name="Lamar B."/>
            <person name="Yordan C."/>
            <person name="Ma P."/>
            <person name="Zhong J."/>
            <person name="Preston R."/>
            <person name="Vil D."/>
            <person name="Shekher M."/>
            <person name="Matero A."/>
            <person name="Shah R."/>
            <person name="Swaby I.K."/>
            <person name="O'Shaughnessy A."/>
            <person name="Rodriguez M."/>
            <person name="Hoffman J."/>
            <person name="Till S."/>
            <person name="Granat S."/>
            <person name="Shohdy N."/>
            <person name="Hasegawa A."/>
            <person name="Hameed A."/>
            <person name="Lodhi M."/>
            <person name="Johnson A."/>
            <person name="Chen E."/>
            <person name="Marra M.A."/>
            <person name="Martienssen R."/>
            <person name="McCombie W.R."/>
        </authorList>
    </citation>
    <scope>NUCLEOTIDE SEQUENCE [LARGE SCALE GENOMIC DNA]</scope>
    <source>
        <strain>cv. Columbia</strain>
    </source>
</reference>
<reference key="2">
    <citation type="journal article" date="2017" name="Plant J.">
        <title>Araport11: a complete reannotation of the Arabidopsis thaliana reference genome.</title>
        <authorList>
            <person name="Cheng C.Y."/>
            <person name="Krishnakumar V."/>
            <person name="Chan A.P."/>
            <person name="Thibaud-Nissen F."/>
            <person name="Schobel S."/>
            <person name="Town C.D."/>
        </authorList>
    </citation>
    <scope>GENOME REANNOTATION</scope>
    <source>
        <strain>cv. Columbia</strain>
    </source>
</reference>
<reference key="3">
    <citation type="journal article" date="2003" name="Science">
        <title>Empirical analysis of transcriptional activity in the Arabidopsis genome.</title>
        <authorList>
            <person name="Yamada K."/>
            <person name="Lim J."/>
            <person name="Dale J.M."/>
            <person name="Chen H."/>
            <person name="Shinn P."/>
            <person name="Palm C.J."/>
            <person name="Southwick A.M."/>
            <person name="Wu H.C."/>
            <person name="Kim C.J."/>
            <person name="Nguyen M."/>
            <person name="Pham P.K."/>
            <person name="Cheuk R.F."/>
            <person name="Karlin-Newmann G."/>
            <person name="Liu S.X."/>
            <person name="Lam B."/>
            <person name="Sakano H."/>
            <person name="Wu T."/>
            <person name="Yu G."/>
            <person name="Miranda M."/>
            <person name="Quach H.L."/>
            <person name="Tripp M."/>
            <person name="Chang C.H."/>
            <person name="Lee J.M."/>
            <person name="Toriumi M.J."/>
            <person name="Chan M.M."/>
            <person name="Tang C.C."/>
            <person name="Onodera C.S."/>
            <person name="Deng J.M."/>
            <person name="Akiyama K."/>
            <person name="Ansari Y."/>
            <person name="Arakawa T."/>
            <person name="Banh J."/>
            <person name="Banno F."/>
            <person name="Bowser L."/>
            <person name="Brooks S.Y."/>
            <person name="Carninci P."/>
            <person name="Chao Q."/>
            <person name="Choy N."/>
            <person name="Enju A."/>
            <person name="Goldsmith A.D."/>
            <person name="Gurjal M."/>
            <person name="Hansen N.F."/>
            <person name="Hayashizaki Y."/>
            <person name="Johnson-Hopson C."/>
            <person name="Hsuan V.W."/>
            <person name="Iida K."/>
            <person name="Karnes M."/>
            <person name="Khan S."/>
            <person name="Koesema E."/>
            <person name="Ishida J."/>
            <person name="Jiang P.X."/>
            <person name="Jones T."/>
            <person name="Kawai J."/>
            <person name="Kamiya A."/>
            <person name="Meyers C."/>
            <person name="Nakajima M."/>
            <person name="Narusaka M."/>
            <person name="Seki M."/>
            <person name="Sakurai T."/>
            <person name="Satou M."/>
            <person name="Tamse R."/>
            <person name="Vaysberg M."/>
            <person name="Wallender E.K."/>
            <person name="Wong C."/>
            <person name="Yamamura Y."/>
            <person name="Yuan S."/>
            <person name="Shinozaki K."/>
            <person name="Davis R.W."/>
            <person name="Theologis A."/>
            <person name="Ecker J.R."/>
        </authorList>
    </citation>
    <scope>NUCLEOTIDE SEQUENCE [LARGE SCALE MRNA]</scope>
    <source>
        <strain>cv. Columbia</strain>
    </source>
</reference>
<reference key="4">
    <citation type="journal article" date="2003" name="Trends Plant Sci.">
        <title>First glance at the plant APC/C, a highly conserved ubiquitin-protein ligase.</title>
        <authorList>
            <person name="Capron A."/>
            <person name="Okresz L."/>
            <person name="Genschik P."/>
        </authorList>
    </citation>
    <scope>REVIEW</scope>
</reference>
<reference key="5">
    <citation type="journal article" date="2005" name="Cell Cycle">
        <title>Arabidopsis anaphase-promoting complexes: multiple activators and wide range of substrates might keep APC perpetually busy.</title>
        <authorList>
            <person name="Fueloep K."/>
            <person name="Tarayre S."/>
            <person name="Kelemen Z."/>
            <person name="Horvath G."/>
            <person name="Kevei Z."/>
            <person name="Nikovics K."/>
            <person name="Bako L."/>
            <person name="Brown S."/>
            <person name="Kondorosi A."/>
            <person name="Kondorosi E."/>
        </authorList>
    </citation>
    <scope>FUNCTION</scope>
    <scope>DEVELOPMENTAL STAGE</scope>
    <scope>ASSOCIATION WITH THE APC/C COMPLEX</scope>
    <scope>INTERACTION WITH CYCA1-1; CYCA1-2; CYCA3-4; CYCB1-1 AND CYCB1-2</scope>
</reference>
<reference key="6">
    <citation type="journal article" date="2009" name="Proc. Natl. Acad. Sci. U.S.A.">
        <title>APC/C-CCS52A complexes control meristem maintenance in the Arabidopsis root.</title>
        <authorList>
            <person name="Vanstraelen M."/>
            <person name="Baloban M."/>
            <person name="Da Ines O."/>
            <person name="Cultrone A."/>
            <person name="Lammens T."/>
            <person name="Boudolf V."/>
            <person name="Brown S.C."/>
            <person name="De Veylder L."/>
            <person name="Mergaert P."/>
            <person name="Kondorosi E."/>
        </authorList>
    </citation>
    <scope>FUNCTION</scope>
    <scope>DISRUPTION PHENOTYPE</scope>
    <scope>TISSUE SPECIFICITY</scope>
    <scope>SUBCELLULAR LOCATION</scope>
</reference>
<reference key="7">
    <citation type="journal article" date="2010" name="BMC Plant Biol.">
        <title>Genomic evolution and complexity of the Anaphase-promoting Complex (APC) in land plants.</title>
        <authorList>
            <person name="Lima M.D.F."/>
            <person name="Eloy N.B."/>
            <person name="Pegoraro C."/>
            <person name="Sagit R."/>
            <person name="Rojas C."/>
            <person name="Bretz T."/>
            <person name="Vargas L."/>
            <person name="Elofsson A."/>
            <person name="de Oliveira A.C."/>
            <person name="Hemerly A.S."/>
            <person name="Ferreira P.C.G."/>
        </authorList>
    </citation>
    <scope>REVIEW</scope>
    <scope>GENE FAMILY</scope>
</reference>
<reference key="8">
    <citation type="journal article" date="2011" name="PLoS ONE">
        <title>Conserved CDC20 cell cycle functions are carried out by two of the five isoforms in Arabidopsis thaliana.</title>
        <authorList>
            <person name="Kevei Z."/>
            <person name="Baloban M."/>
            <person name="Da Ines O."/>
            <person name="Tiricz H."/>
            <person name="Kroll A."/>
            <person name="Regulski K."/>
            <person name="Mergaert P."/>
            <person name="Kondorosi E."/>
        </authorList>
    </citation>
    <scope>INTERACTION WITH CDC20-1 AND CDC20-2</scope>
</reference>
<reference key="9">
    <citation type="journal article" date="2012" name="PLoS Genet.">
        <title>OSD1 promotes meiotic progression via APC/C inhibition and forms a regulatory network with TDM and CYCA1;2/TAM.</title>
        <authorList>
            <person name="Cromer L."/>
            <person name="Heyman J."/>
            <person name="Touati S."/>
            <person name="Harashima H."/>
            <person name="Araou E."/>
            <person name="Girard C."/>
            <person name="Horlow C."/>
            <person name="Wassmann K."/>
            <person name="Schnittger A."/>
            <person name="De Veylder L."/>
            <person name="Mercier R."/>
        </authorList>
    </citation>
    <scope>INTERACTION WITH GIG1</scope>
</reference>
<organism>
    <name type="scientific">Arabidopsis thaliana</name>
    <name type="common">Mouse-ear cress</name>
    <dbReference type="NCBI Taxonomy" id="3702"/>
    <lineage>
        <taxon>Eukaryota</taxon>
        <taxon>Viridiplantae</taxon>
        <taxon>Streptophyta</taxon>
        <taxon>Embryophyta</taxon>
        <taxon>Tracheophyta</taxon>
        <taxon>Spermatophyta</taxon>
        <taxon>Magnoliopsida</taxon>
        <taxon>eudicotyledons</taxon>
        <taxon>Gunneridae</taxon>
        <taxon>Pentapetalae</taxon>
        <taxon>rosids</taxon>
        <taxon>malvids</taxon>
        <taxon>Brassicales</taxon>
        <taxon>Brassicaceae</taxon>
        <taxon>Camelineae</taxon>
        <taxon>Arabidopsis</taxon>
    </lineage>
</organism>
<accession>Q8VZS9</accession>
<accession>Q9T060</accession>
<evidence type="ECO:0000256" key="1">
    <source>
        <dbReference type="SAM" id="MobiDB-lite"/>
    </source>
</evidence>
<evidence type="ECO:0000269" key="2">
    <source>
    </source>
</evidence>
<evidence type="ECO:0000269" key="3">
    <source>
    </source>
</evidence>
<evidence type="ECO:0000269" key="4">
    <source>
    </source>
</evidence>
<evidence type="ECO:0000269" key="5">
    <source>
    </source>
</evidence>
<evidence type="ECO:0000305" key="6"/>
<evidence type="ECO:0000305" key="7">
    <source>
    </source>
</evidence>
<feature type="chain" id="PRO_0000364435" description="Protein FIZZY-RELATED 1">
    <location>
        <begin position="1"/>
        <end position="475"/>
    </location>
</feature>
<feature type="repeat" description="WD 1">
    <location>
        <begin position="166"/>
        <end position="203"/>
    </location>
</feature>
<feature type="repeat" description="WD 2">
    <location>
        <begin position="207"/>
        <end position="246"/>
    </location>
</feature>
<feature type="repeat" description="WD 3">
    <location>
        <begin position="249"/>
        <end position="289"/>
    </location>
</feature>
<feature type="repeat" description="WD 4">
    <location>
        <begin position="290"/>
        <end position="329"/>
    </location>
</feature>
<feature type="repeat" description="WD 5">
    <location>
        <begin position="332"/>
        <end position="374"/>
    </location>
</feature>
<feature type="repeat" description="WD 6">
    <location>
        <begin position="376"/>
        <end position="417"/>
    </location>
</feature>
<feature type="repeat" description="WD 7">
    <location>
        <begin position="420"/>
        <end position="459"/>
    </location>
</feature>
<feature type="region of interest" description="Disordered" evidence="1">
    <location>
        <begin position="1"/>
        <end position="27"/>
    </location>
</feature>
<feature type="compositionally biased region" description="Polar residues" evidence="1">
    <location>
        <begin position="15"/>
        <end position="27"/>
    </location>
</feature>